<comment type="function">
    <text evidence="1">Component of the ESCRT-I complex, a regulator of vesicular trafficking process.</text>
</comment>
<comment type="subunit">
    <text evidence="1">Component of the ESCRT-I complex (endosomal sorting complex required for transport I).</text>
</comment>
<comment type="subcellular location">
    <subcellularLocation>
        <location evidence="1">Endosome</location>
    </subcellularLocation>
</comment>
<comment type="disruption phenotype">
    <text evidence="4">Death at the transition from the first to second instar. Morphological changes in MVBs and developmental defects in the compound eye. However, for the ligands and receptors tested, changes in their cell surface levels or their delivery to lysosomes have not been detected. In early embryos and during sperm individualization defects in actin cytoskeleton organization ocurr.</text>
</comment>
<comment type="similarity">
    <text evidence="2 3">Belongs to the VPS28 family.</text>
</comment>
<dbReference type="EMBL" id="AE013599">
    <property type="protein sequence ID" value="AAF59143.1"/>
    <property type="molecule type" value="Genomic_DNA"/>
</dbReference>
<dbReference type="EMBL" id="AY060620">
    <property type="protein sequence ID" value="AAL28168.1"/>
    <property type="molecule type" value="mRNA"/>
</dbReference>
<dbReference type="RefSeq" id="NP_001260796.1">
    <property type="nucleotide sequence ID" value="NM_001273867.2"/>
</dbReference>
<dbReference type="RefSeq" id="NP_652053.1">
    <property type="nucleotide sequence ID" value="NM_143796.4"/>
</dbReference>
<dbReference type="SMR" id="Q9V359"/>
<dbReference type="BioGRID" id="70793">
    <property type="interactions" value="34"/>
</dbReference>
<dbReference type="ComplexPortal" id="CPX-2457">
    <property type="entry name" value="ESCRT-I complex, Vps37B variant"/>
</dbReference>
<dbReference type="ComplexPortal" id="CPX-2460">
    <property type="entry name" value="ESCRT-I complex, Vps37A variant"/>
</dbReference>
<dbReference type="DIP" id="DIP-20897N"/>
<dbReference type="FunCoup" id="Q9V359">
    <property type="interactions" value="1785"/>
</dbReference>
<dbReference type="IntAct" id="Q9V359">
    <property type="interactions" value="32"/>
</dbReference>
<dbReference type="STRING" id="7227.FBpp0302051"/>
<dbReference type="PaxDb" id="7227-FBpp0302051"/>
<dbReference type="DNASU" id="47408"/>
<dbReference type="EnsemblMetazoa" id="FBtr0088825">
    <property type="protein sequence ID" value="FBpp0087901"/>
    <property type="gene ID" value="FBgn0021814"/>
</dbReference>
<dbReference type="EnsemblMetazoa" id="FBtr0310370">
    <property type="protein sequence ID" value="FBpp0302051"/>
    <property type="gene ID" value="FBgn0021814"/>
</dbReference>
<dbReference type="GeneID" id="47408"/>
<dbReference type="KEGG" id="dme:Dmel_CG12770"/>
<dbReference type="UCSC" id="CG12770-RA">
    <property type="organism name" value="d. melanogaster"/>
</dbReference>
<dbReference type="AGR" id="FB:FBgn0021814"/>
<dbReference type="CTD" id="51160"/>
<dbReference type="FlyBase" id="FBgn0021814">
    <property type="gene designation" value="Vps28"/>
</dbReference>
<dbReference type="VEuPathDB" id="VectorBase:FBgn0021814"/>
<dbReference type="eggNOG" id="KOG3284">
    <property type="taxonomic scope" value="Eukaryota"/>
</dbReference>
<dbReference type="GeneTree" id="ENSGT00390000007486"/>
<dbReference type="HOGENOM" id="CLU_076417_2_0_1"/>
<dbReference type="InParanoid" id="Q9V359"/>
<dbReference type="OMA" id="CDEFPTV"/>
<dbReference type="OrthoDB" id="2671at2759"/>
<dbReference type="PhylomeDB" id="Q9V359"/>
<dbReference type="Reactome" id="R-DME-917729">
    <property type="pathway name" value="Endosomal Sorting Complex Required For Transport (ESCRT)"/>
</dbReference>
<dbReference type="SignaLink" id="Q9V359"/>
<dbReference type="BioGRID-ORCS" id="47408">
    <property type="hits" value="0 hits in 1 CRISPR screen"/>
</dbReference>
<dbReference type="ChiTaRS" id="Vps28">
    <property type="organism name" value="fly"/>
</dbReference>
<dbReference type="GenomeRNAi" id="47408"/>
<dbReference type="PRO" id="PR:Q9V359"/>
<dbReference type="Proteomes" id="UP000000803">
    <property type="component" value="Chromosome 2R"/>
</dbReference>
<dbReference type="Bgee" id="FBgn0021814">
    <property type="expression patterns" value="Expressed in adult enteroendocrine precursor cell in adult midgut (Drosophila) and 171 other cell types or tissues"/>
</dbReference>
<dbReference type="ExpressionAtlas" id="Q9V359">
    <property type="expression patterns" value="baseline and differential"/>
</dbReference>
<dbReference type="GO" id="GO:0000813">
    <property type="term" value="C:ESCRT I complex"/>
    <property type="evidence" value="ECO:0000314"/>
    <property type="project" value="FlyBase"/>
</dbReference>
<dbReference type="GO" id="GO:0044877">
    <property type="term" value="F:protein-containing complex binding"/>
    <property type="evidence" value="ECO:0000318"/>
    <property type="project" value="GO_Central"/>
</dbReference>
<dbReference type="GO" id="GO:0097352">
    <property type="term" value="P:autophagosome maturation"/>
    <property type="evidence" value="ECO:0000315"/>
    <property type="project" value="FlyBase"/>
</dbReference>
<dbReference type="GO" id="GO:0006914">
    <property type="term" value="P:autophagy"/>
    <property type="evidence" value="ECO:0000315"/>
    <property type="project" value="FlyBase"/>
</dbReference>
<dbReference type="GO" id="GO:0032509">
    <property type="term" value="P:endosome transport via multivesicular body sorting pathway"/>
    <property type="evidence" value="ECO:0000315"/>
    <property type="project" value="FlyBase"/>
</dbReference>
<dbReference type="GO" id="GO:0036257">
    <property type="term" value="P:multivesicular body organization"/>
    <property type="evidence" value="ECO:0000315"/>
    <property type="project" value="FlyBase"/>
</dbReference>
<dbReference type="GO" id="GO:0016322">
    <property type="term" value="P:neuron remodeling"/>
    <property type="evidence" value="ECO:0000315"/>
    <property type="project" value="FlyBase"/>
</dbReference>
<dbReference type="GO" id="GO:0043328">
    <property type="term" value="P:protein transport to vacuole involved in ubiquitin-dependent protein catabolic process via the multivesicular body sorting pathway"/>
    <property type="evidence" value="ECO:0000318"/>
    <property type="project" value="GO_Central"/>
</dbReference>
<dbReference type="GO" id="GO:0043162">
    <property type="term" value="P:ubiquitin-dependent protein catabolic process via the multivesicular body sorting pathway"/>
    <property type="evidence" value="ECO:0000315"/>
    <property type="project" value="FlyBase"/>
</dbReference>
<dbReference type="FunFam" id="1.20.120.1130:FF:000001">
    <property type="entry name" value="Vacuolar protein sorting-associated protein 28 homolog"/>
    <property type="match status" value="1"/>
</dbReference>
<dbReference type="FunFam" id="1.20.1440.200:FF:000001">
    <property type="entry name" value="Vacuolar protein sorting-associated protein 28 homolog"/>
    <property type="match status" value="1"/>
</dbReference>
<dbReference type="Gene3D" id="1.20.120.1130">
    <property type="match status" value="1"/>
</dbReference>
<dbReference type="Gene3D" id="1.20.1440.200">
    <property type="match status" value="1"/>
</dbReference>
<dbReference type="InterPro" id="IPR037202">
    <property type="entry name" value="ESCRT_assembly_dom"/>
</dbReference>
<dbReference type="InterPro" id="IPR007143">
    <property type="entry name" value="Vps28"/>
</dbReference>
<dbReference type="InterPro" id="IPR017899">
    <property type="entry name" value="VPS28_C"/>
</dbReference>
<dbReference type="InterPro" id="IPR037206">
    <property type="entry name" value="VPS28_C_sf"/>
</dbReference>
<dbReference type="InterPro" id="IPR017898">
    <property type="entry name" value="VPS28_N"/>
</dbReference>
<dbReference type="InterPro" id="IPR038358">
    <property type="entry name" value="VPS28_N_sf"/>
</dbReference>
<dbReference type="PANTHER" id="PTHR12937">
    <property type="entry name" value="VACUOLAR PROTEIN SORTING 28, ISOFORM 2 VPS28"/>
    <property type="match status" value="1"/>
</dbReference>
<dbReference type="PANTHER" id="PTHR12937:SF0">
    <property type="entry name" value="VACUOLAR PROTEIN SORTING-ASSOCIATED PROTEIN 28 HOMOLOG"/>
    <property type="match status" value="1"/>
</dbReference>
<dbReference type="Pfam" id="PF03997">
    <property type="entry name" value="VPS28"/>
    <property type="match status" value="1"/>
</dbReference>
<dbReference type="PIRSF" id="PIRSF017535">
    <property type="entry name" value="VPS28"/>
    <property type="match status" value="1"/>
</dbReference>
<dbReference type="SUPFAM" id="SSF140111">
    <property type="entry name" value="Endosomal sorting complex assembly domain"/>
    <property type="match status" value="1"/>
</dbReference>
<dbReference type="SUPFAM" id="SSF140427">
    <property type="entry name" value="VPS28 C-terminal domain-like"/>
    <property type="match status" value="1"/>
</dbReference>
<dbReference type="PROSITE" id="PS51310">
    <property type="entry name" value="VPS28_C"/>
    <property type="match status" value="1"/>
</dbReference>
<dbReference type="PROSITE" id="PS51313">
    <property type="entry name" value="VPS28_N"/>
    <property type="match status" value="1"/>
</dbReference>
<gene>
    <name type="primary">Vps28</name>
    <name type="synonym">l(2)k16503</name>
    <name type="ORF">CG12770</name>
</gene>
<name>VPS28_DROME</name>
<keyword id="KW-0967">Endosome</keyword>
<keyword id="KW-0653">Protein transport</keyword>
<keyword id="KW-1185">Reference proteome</keyword>
<keyword id="KW-0813">Transport</keyword>
<feature type="chain" id="PRO_0000120954" description="Vacuolar protein sorting-associated protein 28 homolog">
    <location>
        <begin position="1"/>
        <end position="210"/>
    </location>
</feature>
<feature type="domain" description="VPS28 N-terminal" evidence="3">
    <location>
        <begin position="1"/>
        <end position="108"/>
    </location>
</feature>
<feature type="domain" description="VPS28 C-terminal" evidence="2">
    <location>
        <begin position="112"/>
        <end position="208"/>
    </location>
</feature>
<accession>Q9V359</accession>
<sequence length="210" mass="24512">MQEQSPELYEEVKLFRNAREREKYDNMADLYAIINTIQQLEKAYIRDCITPQEYTAACSKYLVQYKVAFKQVQCDEFPSVETFVKKFRLDCPAALERIREDRPITIRDDKGNTSKCIAEIVSLFITIMDKLRLQINTMDALQPDVKDLADNMNRLSLIPEDFDAKLKVEKWLGSLNEMQASDELSEGQVRQFLFDLESAYADFNKLLHSQ</sequence>
<reference key="1">
    <citation type="journal article" date="2000" name="Science">
        <title>The genome sequence of Drosophila melanogaster.</title>
        <authorList>
            <person name="Adams M.D."/>
            <person name="Celniker S.E."/>
            <person name="Holt R.A."/>
            <person name="Evans C.A."/>
            <person name="Gocayne J.D."/>
            <person name="Amanatides P.G."/>
            <person name="Scherer S.E."/>
            <person name="Li P.W."/>
            <person name="Hoskins R.A."/>
            <person name="Galle R.F."/>
            <person name="George R.A."/>
            <person name="Lewis S.E."/>
            <person name="Richards S."/>
            <person name="Ashburner M."/>
            <person name="Henderson S.N."/>
            <person name="Sutton G.G."/>
            <person name="Wortman J.R."/>
            <person name="Yandell M.D."/>
            <person name="Zhang Q."/>
            <person name="Chen L.X."/>
            <person name="Brandon R.C."/>
            <person name="Rogers Y.-H.C."/>
            <person name="Blazej R.G."/>
            <person name="Champe M."/>
            <person name="Pfeiffer B.D."/>
            <person name="Wan K.H."/>
            <person name="Doyle C."/>
            <person name="Baxter E.G."/>
            <person name="Helt G."/>
            <person name="Nelson C.R."/>
            <person name="Miklos G.L.G."/>
            <person name="Abril J.F."/>
            <person name="Agbayani A."/>
            <person name="An H.-J."/>
            <person name="Andrews-Pfannkoch C."/>
            <person name="Baldwin D."/>
            <person name="Ballew R.M."/>
            <person name="Basu A."/>
            <person name="Baxendale J."/>
            <person name="Bayraktaroglu L."/>
            <person name="Beasley E.M."/>
            <person name="Beeson K.Y."/>
            <person name="Benos P.V."/>
            <person name="Berman B.P."/>
            <person name="Bhandari D."/>
            <person name="Bolshakov S."/>
            <person name="Borkova D."/>
            <person name="Botchan M.R."/>
            <person name="Bouck J."/>
            <person name="Brokstein P."/>
            <person name="Brottier P."/>
            <person name="Burtis K.C."/>
            <person name="Busam D.A."/>
            <person name="Butler H."/>
            <person name="Cadieu E."/>
            <person name="Center A."/>
            <person name="Chandra I."/>
            <person name="Cherry J.M."/>
            <person name="Cawley S."/>
            <person name="Dahlke C."/>
            <person name="Davenport L.B."/>
            <person name="Davies P."/>
            <person name="de Pablos B."/>
            <person name="Delcher A."/>
            <person name="Deng Z."/>
            <person name="Mays A.D."/>
            <person name="Dew I."/>
            <person name="Dietz S.M."/>
            <person name="Dodson K."/>
            <person name="Doup L.E."/>
            <person name="Downes M."/>
            <person name="Dugan-Rocha S."/>
            <person name="Dunkov B.C."/>
            <person name="Dunn P."/>
            <person name="Durbin K.J."/>
            <person name="Evangelista C.C."/>
            <person name="Ferraz C."/>
            <person name="Ferriera S."/>
            <person name="Fleischmann W."/>
            <person name="Fosler C."/>
            <person name="Gabrielian A.E."/>
            <person name="Garg N.S."/>
            <person name="Gelbart W.M."/>
            <person name="Glasser K."/>
            <person name="Glodek A."/>
            <person name="Gong F."/>
            <person name="Gorrell J.H."/>
            <person name="Gu Z."/>
            <person name="Guan P."/>
            <person name="Harris M."/>
            <person name="Harris N.L."/>
            <person name="Harvey D.A."/>
            <person name="Heiman T.J."/>
            <person name="Hernandez J.R."/>
            <person name="Houck J."/>
            <person name="Hostin D."/>
            <person name="Houston K.A."/>
            <person name="Howland T.J."/>
            <person name="Wei M.-H."/>
            <person name="Ibegwam C."/>
            <person name="Jalali M."/>
            <person name="Kalush F."/>
            <person name="Karpen G.H."/>
            <person name="Ke Z."/>
            <person name="Kennison J.A."/>
            <person name="Ketchum K.A."/>
            <person name="Kimmel B.E."/>
            <person name="Kodira C.D."/>
            <person name="Kraft C.L."/>
            <person name="Kravitz S."/>
            <person name="Kulp D."/>
            <person name="Lai Z."/>
            <person name="Lasko P."/>
            <person name="Lei Y."/>
            <person name="Levitsky A.A."/>
            <person name="Li J.H."/>
            <person name="Li Z."/>
            <person name="Liang Y."/>
            <person name="Lin X."/>
            <person name="Liu X."/>
            <person name="Mattei B."/>
            <person name="McIntosh T.C."/>
            <person name="McLeod M.P."/>
            <person name="McPherson D."/>
            <person name="Merkulov G."/>
            <person name="Milshina N.V."/>
            <person name="Mobarry C."/>
            <person name="Morris J."/>
            <person name="Moshrefi A."/>
            <person name="Mount S.M."/>
            <person name="Moy M."/>
            <person name="Murphy B."/>
            <person name="Murphy L."/>
            <person name="Muzny D.M."/>
            <person name="Nelson D.L."/>
            <person name="Nelson D.R."/>
            <person name="Nelson K.A."/>
            <person name="Nixon K."/>
            <person name="Nusskern D.R."/>
            <person name="Pacleb J.M."/>
            <person name="Palazzolo M."/>
            <person name="Pittman G.S."/>
            <person name="Pan S."/>
            <person name="Pollard J."/>
            <person name="Puri V."/>
            <person name="Reese M.G."/>
            <person name="Reinert K."/>
            <person name="Remington K."/>
            <person name="Saunders R.D.C."/>
            <person name="Scheeler F."/>
            <person name="Shen H."/>
            <person name="Shue B.C."/>
            <person name="Siden-Kiamos I."/>
            <person name="Simpson M."/>
            <person name="Skupski M.P."/>
            <person name="Smith T.J."/>
            <person name="Spier E."/>
            <person name="Spradling A.C."/>
            <person name="Stapleton M."/>
            <person name="Strong R."/>
            <person name="Sun E."/>
            <person name="Svirskas R."/>
            <person name="Tector C."/>
            <person name="Turner R."/>
            <person name="Venter E."/>
            <person name="Wang A.H."/>
            <person name="Wang X."/>
            <person name="Wang Z.-Y."/>
            <person name="Wassarman D.A."/>
            <person name="Weinstock G.M."/>
            <person name="Weissenbach J."/>
            <person name="Williams S.M."/>
            <person name="Woodage T."/>
            <person name="Worley K.C."/>
            <person name="Wu D."/>
            <person name="Yang S."/>
            <person name="Yao Q.A."/>
            <person name="Ye J."/>
            <person name="Yeh R.-F."/>
            <person name="Zaveri J.S."/>
            <person name="Zhan M."/>
            <person name="Zhang G."/>
            <person name="Zhao Q."/>
            <person name="Zheng L."/>
            <person name="Zheng X.H."/>
            <person name="Zhong F.N."/>
            <person name="Zhong W."/>
            <person name="Zhou X."/>
            <person name="Zhu S.C."/>
            <person name="Zhu X."/>
            <person name="Smith H.O."/>
            <person name="Gibbs R.A."/>
            <person name="Myers E.W."/>
            <person name="Rubin G.M."/>
            <person name="Venter J.C."/>
        </authorList>
    </citation>
    <scope>NUCLEOTIDE SEQUENCE [LARGE SCALE GENOMIC DNA]</scope>
    <source>
        <strain>Berkeley</strain>
    </source>
</reference>
<reference key="2">
    <citation type="journal article" date="2002" name="Genome Biol.">
        <title>Annotation of the Drosophila melanogaster euchromatic genome: a systematic review.</title>
        <authorList>
            <person name="Misra S."/>
            <person name="Crosby M.A."/>
            <person name="Mungall C.J."/>
            <person name="Matthews B.B."/>
            <person name="Campbell K.S."/>
            <person name="Hradecky P."/>
            <person name="Huang Y."/>
            <person name="Kaminker J.S."/>
            <person name="Millburn G.H."/>
            <person name="Prochnik S.E."/>
            <person name="Smith C.D."/>
            <person name="Tupy J.L."/>
            <person name="Whitfield E.J."/>
            <person name="Bayraktaroglu L."/>
            <person name="Berman B.P."/>
            <person name="Bettencourt B.R."/>
            <person name="Celniker S.E."/>
            <person name="de Grey A.D.N.J."/>
            <person name="Drysdale R.A."/>
            <person name="Harris N.L."/>
            <person name="Richter J."/>
            <person name="Russo S."/>
            <person name="Schroeder A.J."/>
            <person name="Shu S.Q."/>
            <person name="Stapleton M."/>
            <person name="Yamada C."/>
            <person name="Ashburner M."/>
            <person name="Gelbart W.M."/>
            <person name="Rubin G.M."/>
            <person name="Lewis S.E."/>
        </authorList>
    </citation>
    <scope>GENOME REANNOTATION</scope>
    <source>
        <strain>Berkeley</strain>
    </source>
</reference>
<reference key="3">
    <citation type="journal article" date="2002" name="Genome Biol.">
        <title>A Drosophila full-length cDNA resource.</title>
        <authorList>
            <person name="Stapleton M."/>
            <person name="Carlson J.W."/>
            <person name="Brokstein P."/>
            <person name="Yu C."/>
            <person name="Champe M."/>
            <person name="George R.A."/>
            <person name="Guarin H."/>
            <person name="Kronmiller B."/>
            <person name="Pacleb J.M."/>
            <person name="Park S."/>
            <person name="Wan K.H."/>
            <person name="Rubin G.M."/>
            <person name="Celniker S.E."/>
        </authorList>
    </citation>
    <scope>NUCLEOTIDE SEQUENCE [LARGE SCALE MRNA]</scope>
    <source>
        <strain>Berkeley</strain>
        <tissue>Head</tissue>
    </source>
</reference>
<reference key="4">
    <citation type="journal article" date="2005" name="Mol. Biol. Cell">
        <title>A mutation in dVps28 reveals a link between a subunit of the endosomal sorting complex required for transport-I complex and the actin cytoskeleton in Drosophila.</title>
        <authorList>
            <person name="Sevrioukov E.A."/>
            <person name="Moghrabi N."/>
            <person name="Kuhn M."/>
            <person name="Kramer H."/>
        </authorList>
    </citation>
    <scope>INTERACTION WITH TSG101</scope>
    <scope>DISRUPTION PHENOTYPE</scope>
</reference>
<protein>
    <recommendedName>
        <fullName>Vacuolar protein sorting-associated protein 28 homolog</fullName>
    </recommendedName>
    <alternativeName>
        <fullName>ESCRT-I complex subunit VPS28</fullName>
    </alternativeName>
</protein>
<proteinExistence type="evidence at protein level"/>
<organism>
    <name type="scientific">Drosophila melanogaster</name>
    <name type="common">Fruit fly</name>
    <dbReference type="NCBI Taxonomy" id="7227"/>
    <lineage>
        <taxon>Eukaryota</taxon>
        <taxon>Metazoa</taxon>
        <taxon>Ecdysozoa</taxon>
        <taxon>Arthropoda</taxon>
        <taxon>Hexapoda</taxon>
        <taxon>Insecta</taxon>
        <taxon>Pterygota</taxon>
        <taxon>Neoptera</taxon>
        <taxon>Endopterygota</taxon>
        <taxon>Diptera</taxon>
        <taxon>Brachycera</taxon>
        <taxon>Muscomorpha</taxon>
        <taxon>Ephydroidea</taxon>
        <taxon>Drosophilidae</taxon>
        <taxon>Drosophila</taxon>
        <taxon>Sophophora</taxon>
    </lineage>
</organism>
<evidence type="ECO:0000250" key="1"/>
<evidence type="ECO:0000255" key="2">
    <source>
        <dbReference type="PROSITE-ProRule" id="PRU00642"/>
    </source>
</evidence>
<evidence type="ECO:0000255" key="3">
    <source>
        <dbReference type="PROSITE-ProRule" id="PRU00645"/>
    </source>
</evidence>
<evidence type="ECO:0000269" key="4">
    <source>
    </source>
</evidence>